<evidence type="ECO:0000255" key="1">
    <source>
        <dbReference type="HAMAP-Rule" id="MF_01217"/>
    </source>
</evidence>
<evidence type="ECO:0000255" key="2">
    <source>
        <dbReference type="PROSITE-ProRule" id="PRU00258"/>
    </source>
</evidence>
<comment type="function">
    <text evidence="1">Carrier of the growing fatty acid chain in fatty acid biosynthesis.</text>
</comment>
<comment type="pathway">
    <text evidence="1">Lipid metabolism; fatty acid biosynthesis.</text>
</comment>
<comment type="subcellular location">
    <subcellularLocation>
        <location evidence="1">Cytoplasm</location>
    </subcellularLocation>
</comment>
<comment type="PTM">
    <text evidence="1">4'-phosphopantetheine is transferred from CoA to a specific serine of apo-ACP by AcpS. This modification is essential for activity because fatty acids are bound in thioester linkage to the sulfhydryl of the prosthetic group.</text>
</comment>
<comment type="similarity">
    <text evidence="1">Belongs to the acyl carrier protein (ACP) family.</text>
</comment>
<keyword id="KW-0963">Cytoplasm</keyword>
<keyword id="KW-0275">Fatty acid biosynthesis</keyword>
<keyword id="KW-0276">Fatty acid metabolism</keyword>
<keyword id="KW-0444">Lipid biosynthesis</keyword>
<keyword id="KW-0443">Lipid metabolism</keyword>
<keyword id="KW-0596">Phosphopantetheine</keyword>
<keyword id="KW-0597">Phosphoprotein</keyword>
<accession>B3PUU1</accession>
<reference key="1">
    <citation type="journal article" date="2010" name="Appl. Environ. Microbiol.">
        <title>Conserved symbiotic plasmid DNA sequences in the multireplicon pangenomic structure of Rhizobium etli.</title>
        <authorList>
            <person name="Gonzalez V."/>
            <person name="Acosta J.L."/>
            <person name="Santamaria R.I."/>
            <person name="Bustos P."/>
            <person name="Fernandez J.L."/>
            <person name="Hernandez Gonzalez I.L."/>
            <person name="Diaz R."/>
            <person name="Flores M."/>
            <person name="Palacios R."/>
            <person name="Mora J."/>
            <person name="Davila G."/>
        </authorList>
    </citation>
    <scope>NUCLEOTIDE SEQUENCE [LARGE SCALE GENOMIC DNA]</scope>
    <source>
        <strain>CIAT 652</strain>
    </source>
</reference>
<gene>
    <name evidence="1" type="primary">acpP</name>
    <name type="ordered locus">RHECIAT_CH0001512</name>
</gene>
<feature type="chain" id="PRO_1000139056" description="Acyl carrier protein">
    <location>
        <begin position="1"/>
        <end position="78"/>
    </location>
</feature>
<feature type="domain" description="Carrier" evidence="2">
    <location>
        <begin position="2"/>
        <end position="77"/>
    </location>
</feature>
<feature type="modified residue" description="O-(pantetheine 4'-phosphoryl)serine" evidence="2">
    <location>
        <position position="37"/>
    </location>
</feature>
<protein>
    <recommendedName>
        <fullName evidence="1">Acyl carrier protein</fullName>
        <shortName evidence="1">ACP</shortName>
    </recommendedName>
</protein>
<proteinExistence type="inferred from homology"/>
<organism>
    <name type="scientific">Rhizobium etli (strain CIAT 652)</name>
    <dbReference type="NCBI Taxonomy" id="491916"/>
    <lineage>
        <taxon>Bacteria</taxon>
        <taxon>Pseudomonadati</taxon>
        <taxon>Pseudomonadota</taxon>
        <taxon>Alphaproteobacteria</taxon>
        <taxon>Hyphomicrobiales</taxon>
        <taxon>Rhizobiaceae</taxon>
        <taxon>Rhizobium/Agrobacterium group</taxon>
        <taxon>Rhizobium</taxon>
    </lineage>
</organism>
<dbReference type="EMBL" id="CP001074">
    <property type="protein sequence ID" value="ACE90490.1"/>
    <property type="molecule type" value="Genomic_DNA"/>
</dbReference>
<dbReference type="SMR" id="B3PUU1"/>
<dbReference type="KEGG" id="rec:RHECIAT_CH0001512"/>
<dbReference type="eggNOG" id="COG0236">
    <property type="taxonomic scope" value="Bacteria"/>
</dbReference>
<dbReference type="HOGENOM" id="CLU_108696_5_1_5"/>
<dbReference type="UniPathway" id="UPA00094"/>
<dbReference type="Proteomes" id="UP000008817">
    <property type="component" value="Chromosome"/>
</dbReference>
<dbReference type="GO" id="GO:0005829">
    <property type="term" value="C:cytosol"/>
    <property type="evidence" value="ECO:0007669"/>
    <property type="project" value="TreeGrafter"/>
</dbReference>
<dbReference type="GO" id="GO:0016020">
    <property type="term" value="C:membrane"/>
    <property type="evidence" value="ECO:0007669"/>
    <property type="project" value="GOC"/>
</dbReference>
<dbReference type="GO" id="GO:0000035">
    <property type="term" value="F:acyl binding"/>
    <property type="evidence" value="ECO:0007669"/>
    <property type="project" value="TreeGrafter"/>
</dbReference>
<dbReference type="GO" id="GO:0000036">
    <property type="term" value="F:acyl carrier activity"/>
    <property type="evidence" value="ECO:0007669"/>
    <property type="project" value="UniProtKB-UniRule"/>
</dbReference>
<dbReference type="GO" id="GO:0031177">
    <property type="term" value="F:phosphopantetheine binding"/>
    <property type="evidence" value="ECO:0007669"/>
    <property type="project" value="InterPro"/>
</dbReference>
<dbReference type="GO" id="GO:0009245">
    <property type="term" value="P:lipid A biosynthetic process"/>
    <property type="evidence" value="ECO:0007669"/>
    <property type="project" value="TreeGrafter"/>
</dbReference>
<dbReference type="FunFam" id="1.10.1200.10:FF:000001">
    <property type="entry name" value="Acyl carrier protein"/>
    <property type="match status" value="1"/>
</dbReference>
<dbReference type="Gene3D" id="1.10.1200.10">
    <property type="entry name" value="ACP-like"/>
    <property type="match status" value="1"/>
</dbReference>
<dbReference type="HAMAP" id="MF_01217">
    <property type="entry name" value="Acyl_carrier"/>
    <property type="match status" value="1"/>
</dbReference>
<dbReference type="InterPro" id="IPR003231">
    <property type="entry name" value="ACP"/>
</dbReference>
<dbReference type="InterPro" id="IPR036736">
    <property type="entry name" value="ACP-like_sf"/>
</dbReference>
<dbReference type="InterPro" id="IPR020806">
    <property type="entry name" value="PKS_PP-bd"/>
</dbReference>
<dbReference type="InterPro" id="IPR009081">
    <property type="entry name" value="PP-bd_ACP"/>
</dbReference>
<dbReference type="InterPro" id="IPR006162">
    <property type="entry name" value="Ppantetheine_attach_site"/>
</dbReference>
<dbReference type="NCBIfam" id="TIGR00517">
    <property type="entry name" value="acyl_carrier"/>
    <property type="match status" value="1"/>
</dbReference>
<dbReference type="NCBIfam" id="NF002148">
    <property type="entry name" value="PRK00982.1-2"/>
    <property type="match status" value="1"/>
</dbReference>
<dbReference type="NCBIfam" id="NF002149">
    <property type="entry name" value="PRK00982.1-3"/>
    <property type="match status" value="1"/>
</dbReference>
<dbReference type="NCBIfam" id="NF002150">
    <property type="entry name" value="PRK00982.1-4"/>
    <property type="match status" value="1"/>
</dbReference>
<dbReference type="NCBIfam" id="NF002151">
    <property type="entry name" value="PRK00982.1-5"/>
    <property type="match status" value="1"/>
</dbReference>
<dbReference type="PANTHER" id="PTHR20863">
    <property type="entry name" value="ACYL CARRIER PROTEIN"/>
    <property type="match status" value="1"/>
</dbReference>
<dbReference type="PANTHER" id="PTHR20863:SF76">
    <property type="entry name" value="CARRIER DOMAIN-CONTAINING PROTEIN"/>
    <property type="match status" value="1"/>
</dbReference>
<dbReference type="Pfam" id="PF00550">
    <property type="entry name" value="PP-binding"/>
    <property type="match status" value="1"/>
</dbReference>
<dbReference type="SMART" id="SM00823">
    <property type="entry name" value="PKS_PP"/>
    <property type="match status" value="1"/>
</dbReference>
<dbReference type="SUPFAM" id="SSF47336">
    <property type="entry name" value="ACP-like"/>
    <property type="match status" value="1"/>
</dbReference>
<dbReference type="PROSITE" id="PS50075">
    <property type="entry name" value="CARRIER"/>
    <property type="match status" value="1"/>
</dbReference>
<dbReference type="PROSITE" id="PS00012">
    <property type="entry name" value="PHOSPHOPANTETHEINE"/>
    <property type="match status" value="1"/>
</dbReference>
<name>ACP_RHIE6</name>
<sequence length="78" mass="8368">MSDIAERVKKIVIDHLGVDADKVVESASFIDDLGADSLDTVELVMAFEEEFGVEIPDDAADSILTVGDAVKFIEKAQA</sequence>